<accession>B5EE44</accession>
<reference key="1">
    <citation type="submission" date="2008-07" db="EMBL/GenBank/DDBJ databases">
        <title>Complete sequence of Geobacter bemidjiensis BEM.</title>
        <authorList>
            <consortium name="US DOE Joint Genome Institute"/>
            <person name="Lucas S."/>
            <person name="Copeland A."/>
            <person name="Lapidus A."/>
            <person name="Glavina del Rio T."/>
            <person name="Dalin E."/>
            <person name="Tice H."/>
            <person name="Bruce D."/>
            <person name="Goodwin L."/>
            <person name="Pitluck S."/>
            <person name="Kiss H."/>
            <person name="Brettin T."/>
            <person name="Detter J.C."/>
            <person name="Han C."/>
            <person name="Kuske C.R."/>
            <person name="Schmutz J."/>
            <person name="Larimer F."/>
            <person name="Land M."/>
            <person name="Hauser L."/>
            <person name="Kyrpides N."/>
            <person name="Lykidis A."/>
            <person name="Lovley D."/>
            <person name="Richardson P."/>
        </authorList>
    </citation>
    <scope>NUCLEOTIDE SEQUENCE [LARGE SCALE GENOMIC DNA]</scope>
    <source>
        <strain>ATCC BAA-1014 / DSM 16622 / JCM 12645 / Bem</strain>
    </source>
</reference>
<sequence>MANHKSAMKRIKQTAKRTERNKHERSTLRTFIKRVREAVATKDQEAAKAALAVAIPVIDGAATKGIIHSSNASRNVSRLTKLVNTLG</sequence>
<dbReference type="EMBL" id="CP001124">
    <property type="protein sequence ID" value="ACH37782.1"/>
    <property type="molecule type" value="Genomic_DNA"/>
</dbReference>
<dbReference type="RefSeq" id="WP_012529189.1">
    <property type="nucleotide sequence ID" value="NC_011146.1"/>
</dbReference>
<dbReference type="SMR" id="B5EE44"/>
<dbReference type="STRING" id="404380.Gbem_0756"/>
<dbReference type="KEGG" id="gbm:Gbem_0756"/>
<dbReference type="eggNOG" id="COG0268">
    <property type="taxonomic scope" value="Bacteria"/>
</dbReference>
<dbReference type="HOGENOM" id="CLU_160655_3_1_7"/>
<dbReference type="OrthoDB" id="9807974at2"/>
<dbReference type="Proteomes" id="UP000008825">
    <property type="component" value="Chromosome"/>
</dbReference>
<dbReference type="GO" id="GO:0005829">
    <property type="term" value="C:cytosol"/>
    <property type="evidence" value="ECO:0007669"/>
    <property type="project" value="TreeGrafter"/>
</dbReference>
<dbReference type="GO" id="GO:0015935">
    <property type="term" value="C:small ribosomal subunit"/>
    <property type="evidence" value="ECO:0007669"/>
    <property type="project" value="TreeGrafter"/>
</dbReference>
<dbReference type="GO" id="GO:0070181">
    <property type="term" value="F:small ribosomal subunit rRNA binding"/>
    <property type="evidence" value="ECO:0007669"/>
    <property type="project" value="TreeGrafter"/>
</dbReference>
<dbReference type="GO" id="GO:0003735">
    <property type="term" value="F:structural constituent of ribosome"/>
    <property type="evidence" value="ECO:0007669"/>
    <property type="project" value="InterPro"/>
</dbReference>
<dbReference type="GO" id="GO:0006412">
    <property type="term" value="P:translation"/>
    <property type="evidence" value="ECO:0007669"/>
    <property type="project" value="UniProtKB-UniRule"/>
</dbReference>
<dbReference type="FunFam" id="1.20.58.110:FF:000001">
    <property type="entry name" value="30S ribosomal protein S20"/>
    <property type="match status" value="1"/>
</dbReference>
<dbReference type="Gene3D" id="1.20.58.110">
    <property type="entry name" value="Ribosomal protein S20"/>
    <property type="match status" value="1"/>
</dbReference>
<dbReference type="HAMAP" id="MF_00500">
    <property type="entry name" value="Ribosomal_bS20"/>
    <property type="match status" value="1"/>
</dbReference>
<dbReference type="InterPro" id="IPR002583">
    <property type="entry name" value="Ribosomal_bS20"/>
</dbReference>
<dbReference type="InterPro" id="IPR036510">
    <property type="entry name" value="Ribosomal_bS20_sf"/>
</dbReference>
<dbReference type="NCBIfam" id="TIGR00029">
    <property type="entry name" value="S20"/>
    <property type="match status" value="1"/>
</dbReference>
<dbReference type="PANTHER" id="PTHR33398">
    <property type="entry name" value="30S RIBOSOMAL PROTEIN S20"/>
    <property type="match status" value="1"/>
</dbReference>
<dbReference type="PANTHER" id="PTHR33398:SF1">
    <property type="entry name" value="SMALL RIBOSOMAL SUBUNIT PROTEIN BS20C"/>
    <property type="match status" value="1"/>
</dbReference>
<dbReference type="Pfam" id="PF01649">
    <property type="entry name" value="Ribosomal_S20p"/>
    <property type="match status" value="1"/>
</dbReference>
<dbReference type="SUPFAM" id="SSF46992">
    <property type="entry name" value="Ribosomal protein S20"/>
    <property type="match status" value="1"/>
</dbReference>
<name>RS20_CITBB</name>
<evidence type="ECO:0000255" key="1">
    <source>
        <dbReference type="HAMAP-Rule" id="MF_00500"/>
    </source>
</evidence>
<evidence type="ECO:0000256" key="2">
    <source>
        <dbReference type="SAM" id="MobiDB-lite"/>
    </source>
</evidence>
<evidence type="ECO:0000305" key="3"/>
<feature type="chain" id="PRO_1000126451" description="Small ribosomal subunit protein bS20">
    <location>
        <begin position="1"/>
        <end position="87"/>
    </location>
</feature>
<feature type="region of interest" description="Disordered" evidence="2">
    <location>
        <begin position="1"/>
        <end position="27"/>
    </location>
</feature>
<feature type="compositionally biased region" description="Basic residues" evidence="2">
    <location>
        <begin position="1"/>
        <end position="15"/>
    </location>
</feature>
<feature type="compositionally biased region" description="Basic and acidic residues" evidence="2">
    <location>
        <begin position="16"/>
        <end position="27"/>
    </location>
</feature>
<protein>
    <recommendedName>
        <fullName evidence="1">Small ribosomal subunit protein bS20</fullName>
    </recommendedName>
    <alternativeName>
        <fullName evidence="3">30S ribosomal protein S20</fullName>
    </alternativeName>
</protein>
<organism>
    <name type="scientific">Citrifermentans bemidjiense (strain ATCC BAA-1014 / DSM 16622 / JCM 12645 / Bem)</name>
    <name type="common">Geobacter bemidjiensis</name>
    <dbReference type="NCBI Taxonomy" id="404380"/>
    <lineage>
        <taxon>Bacteria</taxon>
        <taxon>Pseudomonadati</taxon>
        <taxon>Thermodesulfobacteriota</taxon>
        <taxon>Desulfuromonadia</taxon>
        <taxon>Geobacterales</taxon>
        <taxon>Geobacteraceae</taxon>
        <taxon>Citrifermentans</taxon>
    </lineage>
</organism>
<keyword id="KW-1185">Reference proteome</keyword>
<keyword id="KW-0687">Ribonucleoprotein</keyword>
<keyword id="KW-0689">Ribosomal protein</keyword>
<keyword id="KW-0694">RNA-binding</keyword>
<keyword id="KW-0699">rRNA-binding</keyword>
<comment type="function">
    <text evidence="1">Binds directly to 16S ribosomal RNA.</text>
</comment>
<comment type="similarity">
    <text evidence="1">Belongs to the bacterial ribosomal protein bS20 family.</text>
</comment>
<gene>
    <name evidence="1" type="primary">rpsT</name>
    <name type="ordered locus">Gbem_0756</name>
</gene>
<proteinExistence type="inferred from homology"/>